<proteinExistence type="inferred from homology"/>
<organism>
    <name type="scientific">Klebsiella pneumoniae subsp. pneumoniae (strain ATCC 700721 / MGH 78578)</name>
    <dbReference type="NCBI Taxonomy" id="272620"/>
    <lineage>
        <taxon>Bacteria</taxon>
        <taxon>Pseudomonadati</taxon>
        <taxon>Pseudomonadota</taxon>
        <taxon>Gammaproteobacteria</taxon>
        <taxon>Enterobacterales</taxon>
        <taxon>Enterobacteriaceae</taxon>
        <taxon>Klebsiella/Raoultella group</taxon>
        <taxon>Klebsiella</taxon>
        <taxon>Klebsiella pneumoniae complex</taxon>
    </lineage>
</organism>
<dbReference type="EMBL" id="CP000647">
    <property type="protein sequence ID" value="ABR78742.1"/>
    <property type="molecule type" value="Genomic_DNA"/>
</dbReference>
<dbReference type="RefSeq" id="WP_015958960.1">
    <property type="nucleotide sequence ID" value="NC_009648.1"/>
</dbReference>
<dbReference type="SMR" id="A6TDS1"/>
<dbReference type="STRING" id="272620.KPN_03345"/>
<dbReference type="jPOST" id="A6TDS1"/>
<dbReference type="PaxDb" id="272620-KPN_03345"/>
<dbReference type="EnsemblBacteria" id="ABR78742">
    <property type="protein sequence ID" value="ABR78742"/>
    <property type="gene ID" value="KPN_03345"/>
</dbReference>
<dbReference type="KEGG" id="kpn:KPN_03345"/>
<dbReference type="HOGENOM" id="CLU_085336_1_0_6"/>
<dbReference type="Proteomes" id="UP000000265">
    <property type="component" value="Chromosome"/>
</dbReference>
<dbReference type="GO" id="GO:0005829">
    <property type="term" value="C:cytosol"/>
    <property type="evidence" value="ECO:0007669"/>
    <property type="project" value="TreeGrafter"/>
</dbReference>
<dbReference type="FunFam" id="1.20.120.740:FF:000001">
    <property type="entry name" value="UPF0149 protein YgfB"/>
    <property type="match status" value="1"/>
</dbReference>
<dbReference type="Gene3D" id="1.20.120.740">
    <property type="entry name" value="YgfB uncharacterised protein family UPF0149, PF03695"/>
    <property type="match status" value="1"/>
</dbReference>
<dbReference type="HAMAP" id="MF_00346">
    <property type="entry name" value="UPF0149"/>
    <property type="match status" value="1"/>
</dbReference>
<dbReference type="InterPro" id="IPR011978">
    <property type="entry name" value="YgfB-like"/>
</dbReference>
<dbReference type="InterPro" id="IPR036255">
    <property type="entry name" value="YgfB-like_sf"/>
</dbReference>
<dbReference type="NCBIfam" id="NF002477">
    <property type="entry name" value="PRK01736.1"/>
    <property type="match status" value="1"/>
</dbReference>
<dbReference type="NCBIfam" id="TIGR02292">
    <property type="entry name" value="ygfB_yecA"/>
    <property type="match status" value="1"/>
</dbReference>
<dbReference type="PANTHER" id="PTHR37528">
    <property type="entry name" value="UPF0149 PROTEIN YGFB"/>
    <property type="match status" value="1"/>
</dbReference>
<dbReference type="PANTHER" id="PTHR37528:SF1">
    <property type="entry name" value="UPF0149 PROTEIN YGFB"/>
    <property type="match status" value="1"/>
</dbReference>
<dbReference type="Pfam" id="PF03695">
    <property type="entry name" value="UPF0149"/>
    <property type="match status" value="1"/>
</dbReference>
<dbReference type="SUPFAM" id="SSF101327">
    <property type="entry name" value="YgfB-like"/>
    <property type="match status" value="1"/>
</dbReference>
<evidence type="ECO:0000255" key="1">
    <source>
        <dbReference type="HAMAP-Rule" id="MF_00346"/>
    </source>
</evidence>
<sequence length="192" mass="21222">MSIQNEMPGYNDVYQLLNQQGVGLTPAEMHGLISGLLCGGNTDSSWQPLVHDLTNEGLAFGHELAQALRNMHSAISDSLDDDGFLFQLYLPEGDAVSVFDRADALAGWVNHFLLGLGVSQPKLDKVKDETGEAIDDLRNIAQLGYDEDEDQEELEMSLEEIIEYVRVAALLCHDTFARQQPTAPEVRKPTLH</sequence>
<name>Y3281_KLEP7</name>
<gene>
    <name type="ordered locus">KPN78578_32810</name>
    <name type="ORF">KPN_03345</name>
</gene>
<reference key="1">
    <citation type="submission" date="2006-09" db="EMBL/GenBank/DDBJ databases">
        <authorList>
            <consortium name="The Klebsiella pneumonia Genome Sequencing Project"/>
            <person name="McClelland M."/>
            <person name="Sanderson E.K."/>
            <person name="Spieth J."/>
            <person name="Clifton W.S."/>
            <person name="Latreille P."/>
            <person name="Sabo A."/>
            <person name="Pepin K."/>
            <person name="Bhonagiri V."/>
            <person name="Porwollik S."/>
            <person name="Ali J."/>
            <person name="Wilson R.K."/>
        </authorList>
    </citation>
    <scope>NUCLEOTIDE SEQUENCE [LARGE SCALE GENOMIC DNA]</scope>
    <source>
        <strain>ATCC 700721 / MGH 78578</strain>
    </source>
</reference>
<feature type="chain" id="PRO_1000059828" description="UPF0149 protein KPN78578_32810">
    <location>
        <begin position="1"/>
        <end position="192"/>
    </location>
</feature>
<accession>A6TDS1</accession>
<comment type="similarity">
    <text evidence="1">Belongs to the UPF0149 family.</text>
</comment>
<protein>
    <recommendedName>
        <fullName evidence="1">UPF0149 protein KPN78578_32810</fullName>
    </recommendedName>
</protein>